<sequence length="493" mass="56731">MSLLKMEYNLYTELKKMTCGQSLSLFNEDGDFVEVEPGSSFKFLIPKGFYSSPSVKTSLVFETLTTTDNKITSINPTNAPKLYPIQCKVVSEVVSNMRKMIELKRPLYITLHLACGFGKTITTCYLMAIHGRKTVICVPNKMLIHQWKTQVEAVGLEHKISIDGVSILLKELKTQSPDVLIVVSRHLTNDAFCKYINKHYDLFILDESHTYNLMNNTAVTRFLAYYPPMMCYFLTATPRPSNRIYCNSIINIAKLSDLKKTIYVVDSFFEPYSTDNIRHMIKRLDGASNKYHIYTEKLLSVDEPRNQLILNTLVEEFKSGTINRILVITKLREHMVLFYKRLLNLFGPEVVFIGDAQNRRTPDMVKSIKELNRFIFVSTLFYSGTGLDIPSLDSLFICSAVINNMQIEQLLGRVCRETALLDRRVYVFPNTSIKEIKYMIGNFVQRIISLSVDKLGFKQESYRKHQESDPTSACTTSSREERVLNRIFNSQNR</sequence>
<comment type="function">
    <text evidence="1">DNA helicase which seems to act as a postreplicative transcription termination factor. Involved in ATP-dependent release of nascent RNA. Forms a stable complex with single-stranded DNA, and to a lesser extent RNA (By similarity).</text>
</comment>
<comment type="subunit">
    <text evidence="1">Interacts with G2. Might be part of a transcription complex composed at least of G2, A18, and H5.</text>
</comment>
<comment type="subcellular location">
    <subcellularLocation>
        <location evidence="1">Virion</location>
    </subcellularLocation>
    <text evidence="1">Localizes to the virion core.</text>
</comment>
<comment type="similarity">
    <text evidence="3">Belongs to the helicase family. Poxviruses subfamily.</text>
</comment>
<name>A18_CAMPS</name>
<organismHost>
    <name type="scientific">Camelus</name>
    <dbReference type="NCBI Taxonomy" id="9836"/>
</organismHost>
<organism>
    <name type="scientific">Camelpox virus (strain CMS)</name>
    <dbReference type="NCBI Taxonomy" id="203172"/>
    <lineage>
        <taxon>Viruses</taxon>
        <taxon>Varidnaviria</taxon>
        <taxon>Bamfordvirae</taxon>
        <taxon>Nucleocytoviricota</taxon>
        <taxon>Pokkesviricetes</taxon>
        <taxon>Chitovirales</taxon>
        <taxon>Poxviridae</taxon>
        <taxon>Chordopoxvirinae</taxon>
        <taxon>Orthopoxvirus</taxon>
        <taxon>Camelpox virus</taxon>
    </lineage>
</organism>
<proteinExistence type="inferred from homology"/>
<keyword id="KW-0067">ATP-binding</keyword>
<keyword id="KW-0238">DNA-binding</keyword>
<keyword id="KW-0347">Helicase</keyword>
<keyword id="KW-0378">Hydrolase</keyword>
<keyword id="KW-0426">Late protein</keyword>
<keyword id="KW-0547">Nucleotide-binding</keyword>
<keyword id="KW-1185">Reference proteome</keyword>
<keyword id="KW-0804">Transcription</keyword>
<keyword id="KW-0946">Virion</keyword>
<gene>
    <name type="ordered locus">CMP135R</name>
</gene>
<dbReference type="EC" id="3.6.4.-"/>
<dbReference type="EMBL" id="AY009089">
    <property type="protein sequence ID" value="AAG37625.1"/>
    <property type="molecule type" value="Genomic_DNA"/>
</dbReference>
<dbReference type="Proteomes" id="UP000107153">
    <property type="component" value="Genome"/>
</dbReference>
<dbReference type="GO" id="GO:0044423">
    <property type="term" value="C:virion component"/>
    <property type="evidence" value="ECO:0007669"/>
    <property type="project" value="UniProtKB-KW"/>
</dbReference>
<dbReference type="GO" id="GO:0005524">
    <property type="term" value="F:ATP binding"/>
    <property type="evidence" value="ECO:0007669"/>
    <property type="project" value="UniProtKB-KW"/>
</dbReference>
<dbReference type="GO" id="GO:0003677">
    <property type="term" value="F:DNA binding"/>
    <property type="evidence" value="ECO:0007669"/>
    <property type="project" value="UniProtKB-KW"/>
</dbReference>
<dbReference type="GO" id="GO:0004386">
    <property type="term" value="F:helicase activity"/>
    <property type="evidence" value="ECO:0007669"/>
    <property type="project" value="UniProtKB-KW"/>
</dbReference>
<dbReference type="GO" id="GO:0016787">
    <property type="term" value="F:hydrolase activity"/>
    <property type="evidence" value="ECO:0007669"/>
    <property type="project" value="UniProtKB-KW"/>
</dbReference>
<dbReference type="CDD" id="cd18785">
    <property type="entry name" value="SF2_C"/>
    <property type="match status" value="1"/>
</dbReference>
<dbReference type="Gene3D" id="3.40.50.300">
    <property type="entry name" value="P-loop containing nucleotide triphosphate hydrolases"/>
    <property type="match status" value="2"/>
</dbReference>
<dbReference type="InterPro" id="IPR006935">
    <property type="entry name" value="Helicase/UvrB_N"/>
</dbReference>
<dbReference type="InterPro" id="IPR014001">
    <property type="entry name" value="Helicase_ATP-bd"/>
</dbReference>
<dbReference type="InterPro" id="IPR050742">
    <property type="entry name" value="Helicase_Restrict-Modif_Enz"/>
</dbReference>
<dbReference type="InterPro" id="IPR027417">
    <property type="entry name" value="P-loop_NTPase"/>
</dbReference>
<dbReference type="PANTHER" id="PTHR47396:SF1">
    <property type="entry name" value="ATP-DEPENDENT HELICASE IRC3-RELATED"/>
    <property type="match status" value="1"/>
</dbReference>
<dbReference type="PANTHER" id="PTHR47396">
    <property type="entry name" value="TYPE I RESTRICTION ENZYME ECOKI R PROTEIN"/>
    <property type="match status" value="1"/>
</dbReference>
<dbReference type="Pfam" id="PF04851">
    <property type="entry name" value="ResIII"/>
    <property type="match status" value="1"/>
</dbReference>
<dbReference type="SMART" id="SM00487">
    <property type="entry name" value="DEXDc"/>
    <property type="match status" value="1"/>
</dbReference>
<dbReference type="SUPFAM" id="SSF52540">
    <property type="entry name" value="P-loop containing nucleoside triphosphate hydrolases"/>
    <property type="match status" value="1"/>
</dbReference>
<dbReference type="PROSITE" id="PS51192">
    <property type="entry name" value="HELICASE_ATP_BIND_1"/>
    <property type="match status" value="1"/>
</dbReference>
<feature type="chain" id="PRO_0000102182" description="Transcript termination protein A18">
    <location>
        <begin position="1"/>
        <end position="493"/>
    </location>
</feature>
<feature type="domain" description="Helicase ATP-binding" evidence="2">
    <location>
        <begin position="100"/>
        <end position="256"/>
    </location>
</feature>
<feature type="short sequence motif" description="DESH box">
    <location>
        <begin position="206"/>
        <end position="209"/>
    </location>
</feature>
<feature type="binding site" evidence="2">
    <location>
        <begin position="113"/>
        <end position="120"/>
    </location>
    <ligand>
        <name>ATP</name>
        <dbReference type="ChEBI" id="CHEBI:30616"/>
    </ligand>
</feature>
<accession>Q8QQ34</accession>
<reference key="1">
    <citation type="journal article" date="2002" name="J. Gen. Virol.">
        <title>The sequence of camelpox virus shows it is most closely related to variola virus, the cause of smallpox.</title>
        <authorList>
            <person name="Gubser C."/>
            <person name="Smith G.L."/>
        </authorList>
    </citation>
    <scope>NUCLEOTIDE SEQUENCE [LARGE SCALE GENOMIC DNA]</scope>
</reference>
<evidence type="ECO:0000250" key="1"/>
<evidence type="ECO:0000255" key="2">
    <source>
        <dbReference type="PROSITE-ProRule" id="PRU00541"/>
    </source>
</evidence>
<evidence type="ECO:0000305" key="3"/>
<protein>
    <recommendedName>
        <fullName>Transcript termination protein A18</fullName>
        <ecNumber>3.6.4.-</ecNumber>
    </recommendedName>
</protein>